<evidence type="ECO:0000269" key="1">
    <source>
    </source>
</evidence>
<evidence type="ECO:0000303" key="2">
    <source>
    </source>
</evidence>
<evidence type="ECO:0000305" key="3"/>
<accession>P84690</accession>
<name>SC58_TITOB</name>
<reference evidence="3" key="1">
    <citation type="journal article" date="2004" name="J. Chromatogr. B">
        <title>Proteomics of the venom from the Amazonian scorpion Tityus cambridgei and the role of prolines on mass spectrometry analysis of toxins.</title>
        <authorList>
            <person name="Batista C.V.F."/>
            <person name="del Pozo L."/>
            <person name="Zamudio F.Z."/>
            <person name="Contreras S."/>
            <person name="Becerril B."/>
            <person name="Wanke E."/>
            <person name="Possani L.D."/>
        </authorList>
    </citation>
    <scope>PROTEIN SEQUENCE</scope>
    <scope>SUBCELLULAR LOCATION</scope>
    <scope>TISSUE SPECIFICITY</scope>
    <scope>MASS SPECTROMETRY</scope>
    <source>
        <tissue evidence="1">Venom</tissue>
    </source>
</reference>
<keyword id="KW-0903">Direct protein sequencing</keyword>
<keyword id="KW-0964">Secreted</keyword>
<keyword id="KW-0800">Toxin</keyword>
<feature type="chain" id="PRO_0000066815" description="Toxin To58">
    <location>
        <begin position="1"/>
        <end position="10" status="greater than"/>
    </location>
</feature>
<feature type="non-terminal residue" evidence="2">
    <location>
        <position position="10"/>
    </location>
</feature>
<protein>
    <recommendedName>
        <fullName>Toxin To58</fullName>
    </recommendedName>
    <alternativeName>
        <fullName>Toxin Tc58</fullName>
    </alternativeName>
</protein>
<organism>
    <name type="scientific">Tityus obscurus</name>
    <name type="common">Amazonian scorpion</name>
    <name type="synonym">Tityus cambridgei</name>
    <dbReference type="NCBI Taxonomy" id="1221240"/>
    <lineage>
        <taxon>Eukaryota</taxon>
        <taxon>Metazoa</taxon>
        <taxon>Ecdysozoa</taxon>
        <taxon>Arthropoda</taxon>
        <taxon>Chelicerata</taxon>
        <taxon>Arachnida</taxon>
        <taxon>Scorpiones</taxon>
        <taxon>Buthida</taxon>
        <taxon>Buthoidea</taxon>
        <taxon>Buthidae</taxon>
        <taxon>Tityus</taxon>
    </lineage>
</organism>
<comment type="subcellular location">
    <subcellularLocation>
        <location evidence="1">Secreted</location>
    </subcellularLocation>
</comment>
<comment type="tissue specificity">
    <text evidence="1">Expressed by the venom gland.</text>
</comment>
<comment type="mass spectrometry" mass="5504.1" method="Electrospray" evidence="1"/>
<sequence length="10" mass="1132">KKFGGFLXXI</sequence>
<dbReference type="GO" id="GO:0005576">
    <property type="term" value="C:extracellular region"/>
    <property type="evidence" value="ECO:0007005"/>
    <property type="project" value="UniProtKB"/>
</dbReference>
<dbReference type="GO" id="GO:0090729">
    <property type="term" value="F:toxin activity"/>
    <property type="evidence" value="ECO:0007669"/>
    <property type="project" value="UniProtKB-KW"/>
</dbReference>
<proteinExistence type="evidence at protein level"/>